<protein>
    <recommendedName>
        <fullName evidence="2">Translation initiation factor IF-2</fullName>
    </recommendedName>
</protein>
<reference key="1">
    <citation type="submission" date="2008-10" db="EMBL/GenBank/DDBJ databases">
        <title>Genome sequence of Ureaplasma urealyticum serovar 10 ATCC-33699.</title>
        <authorList>
            <person name="Shrivastava S."/>
            <person name="Methe B.A."/>
            <person name="Glass J."/>
            <person name="White K."/>
            <person name="Duffy L.B."/>
        </authorList>
    </citation>
    <scope>NUCLEOTIDE SEQUENCE [LARGE SCALE GENOMIC DNA]</scope>
    <source>
        <strain>ATCC 33699 / Western</strain>
    </source>
</reference>
<proteinExistence type="inferred from homology"/>
<gene>
    <name evidence="2" type="primary">infB</name>
    <name type="ordered locus">UUR10_0326</name>
</gene>
<name>IF2_UREU1</name>
<evidence type="ECO:0000250" key="1"/>
<evidence type="ECO:0000255" key="2">
    <source>
        <dbReference type="HAMAP-Rule" id="MF_00100"/>
    </source>
</evidence>
<comment type="function">
    <text evidence="2">One of the essential components for the initiation of protein synthesis. Protects formylmethionyl-tRNA from spontaneous hydrolysis and promotes its binding to the 30S ribosomal subunits. Also involved in the hydrolysis of GTP during the formation of the 70S ribosomal complex.</text>
</comment>
<comment type="subcellular location">
    <subcellularLocation>
        <location evidence="2">Cytoplasm</location>
    </subcellularLocation>
</comment>
<comment type="similarity">
    <text evidence="2">Belongs to the TRAFAC class translation factor GTPase superfamily. Classic translation factor GTPase family. IF-2 subfamily.</text>
</comment>
<sequence length="614" mass="67760">MAKKNIKQKKDNRIAIDVKKHIKKVDVGVFGGTFVFTSPLSIAELAPKLNKSTNEIIMRYFKKGVVYNLNTILDEEQIGELCLEYDLDFKIEKNVNTENLLENIAFDDLEADLVARAPIVTIMGHVDHGKTTLLDTIRKSSVTASEAGGITQHIGAYQILKGDKPITFIDTPGHEAFTEMRARGANLTDIVILVVAADDGIKMQTEEAIDHAKAANVPIIVFVNKMDKYEANPDKVLNQLSAKEIVAEELGGDIVFVKGSALKNEGIFELLDSILLIAELNDYKANPNRLAYGTTIEANLDKGHGPLATLLVQNGTLRKGDYLVVGSTYGKIRNMFDEYDNEIEMALPSKPVKVSGFEEVPTAGDKFLALADEKQARAIANDVKQKKIRLERSMLQSSDIRAKIANGELKNINLIIKADVQGSLEALKGIFNSINIEGVTTTLVRSAIGTISESDVRLAQTSDAIIIGFNVRANRIIKDLADSVGVQIMNYDIIYKFKEDLEAWMKGTLDPIIVEEVIGEAKVLKLFKHSQVGTICGCRVINGKIKRNALVRVLRDGIVIYNSKIATLQHNKDSVNEVIADKECGLTIANFNDVKENDIIEVYVKVEKNHDEVK</sequence>
<feature type="chain" id="PRO_1000093842" description="Translation initiation factor IF-2">
    <location>
        <begin position="1"/>
        <end position="614"/>
    </location>
</feature>
<feature type="domain" description="tr-type G">
    <location>
        <begin position="115"/>
        <end position="283"/>
    </location>
</feature>
<feature type="region of interest" description="G1" evidence="1">
    <location>
        <begin position="124"/>
        <end position="131"/>
    </location>
</feature>
<feature type="region of interest" description="G2" evidence="1">
    <location>
        <begin position="149"/>
        <end position="153"/>
    </location>
</feature>
<feature type="region of interest" description="G3" evidence="1">
    <location>
        <begin position="170"/>
        <end position="173"/>
    </location>
</feature>
<feature type="region of interest" description="G4" evidence="1">
    <location>
        <begin position="224"/>
        <end position="227"/>
    </location>
</feature>
<feature type="region of interest" description="G5" evidence="1">
    <location>
        <begin position="260"/>
        <end position="262"/>
    </location>
</feature>
<feature type="binding site" evidence="2">
    <location>
        <begin position="124"/>
        <end position="131"/>
    </location>
    <ligand>
        <name>GTP</name>
        <dbReference type="ChEBI" id="CHEBI:37565"/>
    </ligand>
</feature>
<feature type="binding site" evidence="2">
    <location>
        <begin position="170"/>
        <end position="174"/>
    </location>
    <ligand>
        <name>GTP</name>
        <dbReference type="ChEBI" id="CHEBI:37565"/>
    </ligand>
</feature>
<feature type="binding site" evidence="2">
    <location>
        <begin position="224"/>
        <end position="227"/>
    </location>
    <ligand>
        <name>GTP</name>
        <dbReference type="ChEBI" id="CHEBI:37565"/>
    </ligand>
</feature>
<dbReference type="EMBL" id="CP001184">
    <property type="protein sequence ID" value="ACI60166.1"/>
    <property type="molecule type" value="Genomic_DNA"/>
</dbReference>
<dbReference type="RefSeq" id="WP_012560304.1">
    <property type="nucleotide sequence ID" value="NC_011374.1"/>
</dbReference>
<dbReference type="SMR" id="B5ZBC9"/>
<dbReference type="STRING" id="565575.UUR10_0326"/>
<dbReference type="KEGG" id="uue:UUR10_0326"/>
<dbReference type="eggNOG" id="COG0532">
    <property type="taxonomic scope" value="Bacteria"/>
</dbReference>
<dbReference type="HOGENOM" id="CLU_006301_5_1_14"/>
<dbReference type="OrthoDB" id="9811804at2"/>
<dbReference type="Proteomes" id="UP000002018">
    <property type="component" value="Chromosome"/>
</dbReference>
<dbReference type="GO" id="GO:0005829">
    <property type="term" value="C:cytosol"/>
    <property type="evidence" value="ECO:0007669"/>
    <property type="project" value="TreeGrafter"/>
</dbReference>
<dbReference type="GO" id="GO:0005525">
    <property type="term" value="F:GTP binding"/>
    <property type="evidence" value="ECO:0007669"/>
    <property type="project" value="UniProtKB-KW"/>
</dbReference>
<dbReference type="GO" id="GO:0003924">
    <property type="term" value="F:GTPase activity"/>
    <property type="evidence" value="ECO:0007669"/>
    <property type="project" value="UniProtKB-UniRule"/>
</dbReference>
<dbReference type="GO" id="GO:0003743">
    <property type="term" value="F:translation initiation factor activity"/>
    <property type="evidence" value="ECO:0007669"/>
    <property type="project" value="UniProtKB-UniRule"/>
</dbReference>
<dbReference type="CDD" id="cd01887">
    <property type="entry name" value="IF2_eIF5B"/>
    <property type="match status" value="1"/>
</dbReference>
<dbReference type="CDD" id="cd03702">
    <property type="entry name" value="IF2_mtIF2_II"/>
    <property type="match status" value="1"/>
</dbReference>
<dbReference type="CDD" id="cd03692">
    <property type="entry name" value="mtIF2_IVc"/>
    <property type="match status" value="1"/>
</dbReference>
<dbReference type="FunFam" id="2.40.30.10:FF:000007">
    <property type="entry name" value="Translation initiation factor IF-2"/>
    <property type="match status" value="1"/>
</dbReference>
<dbReference type="FunFam" id="2.40.30.10:FF:000008">
    <property type="entry name" value="Translation initiation factor IF-2"/>
    <property type="match status" value="1"/>
</dbReference>
<dbReference type="FunFam" id="3.40.50.10050:FF:000001">
    <property type="entry name" value="Translation initiation factor IF-2"/>
    <property type="match status" value="1"/>
</dbReference>
<dbReference type="FunFam" id="3.40.50.300:FF:000019">
    <property type="entry name" value="Translation initiation factor IF-2"/>
    <property type="match status" value="1"/>
</dbReference>
<dbReference type="Gene3D" id="3.40.50.300">
    <property type="entry name" value="P-loop containing nucleotide triphosphate hydrolases"/>
    <property type="match status" value="1"/>
</dbReference>
<dbReference type="Gene3D" id="2.40.30.10">
    <property type="entry name" value="Translation factors"/>
    <property type="match status" value="2"/>
</dbReference>
<dbReference type="Gene3D" id="3.40.50.10050">
    <property type="entry name" value="Translation initiation factor IF- 2, domain 3"/>
    <property type="match status" value="1"/>
</dbReference>
<dbReference type="HAMAP" id="MF_00100_B">
    <property type="entry name" value="IF_2_B"/>
    <property type="match status" value="1"/>
</dbReference>
<dbReference type="InterPro" id="IPR053905">
    <property type="entry name" value="EF-G-like_DII"/>
</dbReference>
<dbReference type="InterPro" id="IPR044145">
    <property type="entry name" value="IF2_II"/>
</dbReference>
<dbReference type="InterPro" id="IPR006847">
    <property type="entry name" value="IF2_N"/>
</dbReference>
<dbReference type="InterPro" id="IPR027417">
    <property type="entry name" value="P-loop_NTPase"/>
</dbReference>
<dbReference type="InterPro" id="IPR005225">
    <property type="entry name" value="Small_GTP-bd"/>
</dbReference>
<dbReference type="InterPro" id="IPR000795">
    <property type="entry name" value="T_Tr_GTP-bd_dom"/>
</dbReference>
<dbReference type="InterPro" id="IPR000178">
    <property type="entry name" value="TF_IF2_bacterial-like"/>
</dbReference>
<dbReference type="InterPro" id="IPR015760">
    <property type="entry name" value="TIF_IF2"/>
</dbReference>
<dbReference type="InterPro" id="IPR023115">
    <property type="entry name" value="TIF_IF2_dom3"/>
</dbReference>
<dbReference type="InterPro" id="IPR036925">
    <property type="entry name" value="TIF_IF2_dom3_sf"/>
</dbReference>
<dbReference type="InterPro" id="IPR009000">
    <property type="entry name" value="Transl_B-barrel_sf"/>
</dbReference>
<dbReference type="NCBIfam" id="TIGR00487">
    <property type="entry name" value="IF-2"/>
    <property type="match status" value="1"/>
</dbReference>
<dbReference type="NCBIfam" id="TIGR00231">
    <property type="entry name" value="small_GTP"/>
    <property type="match status" value="1"/>
</dbReference>
<dbReference type="PANTHER" id="PTHR43381:SF5">
    <property type="entry name" value="TR-TYPE G DOMAIN-CONTAINING PROTEIN"/>
    <property type="match status" value="1"/>
</dbReference>
<dbReference type="PANTHER" id="PTHR43381">
    <property type="entry name" value="TRANSLATION INITIATION FACTOR IF-2-RELATED"/>
    <property type="match status" value="1"/>
</dbReference>
<dbReference type="Pfam" id="PF22042">
    <property type="entry name" value="EF-G_D2"/>
    <property type="match status" value="1"/>
</dbReference>
<dbReference type="Pfam" id="PF00009">
    <property type="entry name" value="GTP_EFTU"/>
    <property type="match status" value="1"/>
</dbReference>
<dbReference type="Pfam" id="PF11987">
    <property type="entry name" value="IF-2"/>
    <property type="match status" value="1"/>
</dbReference>
<dbReference type="Pfam" id="PF04760">
    <property type="entry name" value="IF2_N"/>
    <property type="match status" value="1"/>
</dbReference>
<dbReference type="PRINTS" id="PR00315">
    <property type="entry name" value="ELONGATNFCT"/>
</dbReference>
<dbReference type="SUPFAM" id="SSF52156">
    <property type="entry name" value="Initiation factor IF2/eIF5b, domain 3"/>
    <property type="match status" value="1"/>
</dbReference>
<dbReference type="SUPFAM" id="SSF52540">
    <property type="entry name" value="P-loop containing nucleoside triphosphate hydrolases"/>
    <property type="match status" value="1"/>
</dbReference>
<dbReference type="SUPFAM" id="SSF50447">
    <property type="entry name" value="Translation proteins"/>
    <property type="match status" value="2"/>
</dbReference>
<dbReference type="PROSITE" id="PS51722">
    <property type="entry name" value="G_TR_2"/>
    <property type="match status" value="1"/>
</dbReference>
<organism>
    <name type="scientific">Ureaplasma urealyticum serovar 10 (strain ATCC 33699 / Western)</name>
    <dbReference type="NCBI Taxonomy" id="565575"/>
    <lineage>
        <taxon>Bacteria</taxon>
        <taxon>Bacillati</taxon>
        <taxon>Mycoplasmatota</taxon>
        <taxon>Mycoplasmoidales</taxon>
        <taxon>Mycoplasmoidaceae</taxon>
        <taxon>Ureaplasma</taxon>
    </lineage>
</organism>
<keyword id="KW-0963">Cytoplasm</keyword>
<keyword id="KW-0342">GTP-binding</keyword>
<keyword id="KW-0396">Initiation factor</keyword>
<keyword id="KW-0547">Nucleotide-binding</keyword>
<keyword id="KW-0648">Protein biosynthesis</keyword>
<accession>B5ZBC9</accession>